<gene>
    <name evidence="1" type="primary">guaAB</name>
    <name type="synonym">guaA</name>
    <name type="ordered locus">MMP0894</name>
</gene>
<comment type="function">
    <text evidence="1">Catalyzes the synthesis of GMP from XMP.</text>
</comment>
<comment type="catalytic activity">
    <reaction evidence="1">
        <text>XMP + L-glutamine + ATP + H2O = GMP + L-glutamate + AMP + diphosphate + 2 H(+)</text>
        <dbReference type="Rhea" id="RHEA:11680"/>
        <dbReference type="ChEBI" id="CHEBI:15377"/>
        <dbReference type="ChEBI" id="CHEBI:15378"/>
        <dbReference type="ChEBI" id="CHEBI:29985"/>
        <dbReference type="ChEBI" id="CHEBI:30616"/>
        <dbReference type="ChEBI" id="CHEBI:33019"/>
        <dbReference type="ChEBI" id="CHEBI:57464"/>
        <dbReference type="ChEBI" id="CHEBI:58115"/>
        <dbReference type="ChEBI" id="CHEBI:58359"/>
        <dbReference type="ChEBI" id="CHEBI:456215"/>
        <dbReference type="EC" id="6.3.5.2"/>
    </reaction>
</comment>
<comment type="pathway">
    <text evidence="1">Purine metabolism; GMP biosynthesis; GMP from XMP (L-Gln route): step 1/1.</text>
</comment>
<comment type="subunit">
    <text evidence="1">Heterodimer composed of a glutamine amidotransferase subunit (A) and a GMP-binding subunit (B).</text>
</comment>
<name>GUAAB_METMP</name>
<organism>
    <name type="scientific">Methanococcus maripaludis (strain DSM 14266 / JCM 13030 / NBRC 101832 / S2 / LL)</name>
    <dbReference type="NCBI Taxonomy" id="267377"/>
    <lineage>
        <taxon>Archaea</taxon>
        <taxon>Methanobacteriati</taxon>
        <taxon>Methanobacteriota</taxon>
        <taxon>Methanomada group</taxon>
        <taxon>Methanococci</taxon>
        <taxon>Methanococcales</taxon>
        <taxon>Methanococcaceae</taxon>
        <taxon>Methanococcus</taxon>
    </lineage>
</organism>
<reference key="1">
    <citation type="journal article" date="2004" name="J. Bacteriol.">
        <title>Complete genome sequence of the genetically tractable hydrogenotrophic methanogen Methanococcus maripaludis.</title>
        <authorList>
            <person name="Hendrickson E.L."/>
            <person name="Kaul R."/>
            <person name="Zhou Y."/>
            <person name="Bovee D."/>
            <person name="Chapman P."/>
            <person name="Chung J."/>
            <person name="Conway de Macario E."/>
            <person name="Dodsworth J.A."/>
            <person name="Gillett W."/>
            <person name="Graham D.E."/>
            <person name="Hackett M."/>
            <person name="Haydock A.K."/>
            <person name="Kang A."/>
            <person name="Land M.L."/>
            <person name="Levy R."/>
            <person name="Lie T.J."/>
            <person name="Major T.A."/>
            <person name="Moore B.C."/>
            <person name="Porat I."/>
            <person name="Palmeiri A."/>
            <person name="Rouse G."/>
            <person name="Saenphimmachak C."/>
            <person name="Soell D."/>
            <person name="Van Dien S."/>
            <person name="Wang T."/>
            <person name="Whitman W.B."/>
            <person name="Xia Q."/>
            <person name="Zhang Y."/>
            <person name="Larimer F.W."/>
            <person name="Olson M.V."/>
            <person name="Leigh J.A."/>
        </authorList>
    </citation>
    <scope>NUCLEOTIDE SEQUENCE [LARGE SCALE GENOMIC DNA]</scope>
    <source>
        <strain>DSM 14266 / JCM 13030 / NBRC 101832 / S2 / LL</strain>
    </source>
</reference>
<protein>
    <recommendedName>
        <fullName evidence="1">GMP synthase [glutamine-hydrolyzing] subunit B</fullName>
        <ecNumber evidence="1">6.3.5.2</ecNumber>
    </recommendedName>
    <alternativeName>
        <fullName evidence="1">GMP synthetase</fullName>
    </alternativeName>
</protein>
<evidence type="ECO:0000255" key="1">
    <source>
        <dbReference type="HAMAP-Rule" id="MF_00345"/>
    </source>
</evidence>
<sequence length="310" mass="34856">MFKTEPFIEESIEEIRKQINNRKTIIALSGGVDSAVAAVLTDRAVGDKLLAVYVDTGLMRKNESEEIWKIFKEQMGLNLKIVEAKDIFLKELEGVIDPEEKRKIIGRLFIEVFEKVAEEQGEEVLVQGTIAPDWIESEGQIKTHHNIALPGGMVLDVVEPLRELYKDEVRLLAVALGLPDQIAHRQPFPGPGLAVRILGEITDEKLAICKEANFIVSEEIEKTELKNELWQYFAAVLDTKATGVKGDIRDYNWVVALRFVSSLDAMTAHTPEIPFDLIKKISKRITSEIPNVTRVVLDVTDKPPATIEFE</sequence>
<feature type="chain" id="PRO_0000140244" description="GMP synthase [glutamine-hydrolyzing] subunit B">
    <location>
        <begin position="1"/>
        <end position="310"/>
    </location>
</feature>
<feature type="domain" description="GMPS ATP-PPase" evidence="1">
    <location>
        <begin position="2"/>
        <end position="185"/>
    </location>
</feature>
<feature type="binding site" evidence="1">
    <location>
        <begin position="29"/>
        <end position="35"/>
    </location>
    <ligand>
        <name>ATP</name>
        <dbReference type="ChEBI" id="CHEBI:30616"/>
    </ligand>
</feature>
<proteinExistence type="inferred from homology"/>
<keyword id="KW-0067">ATP-binding</keyword>
<keyword id="KW-0332">GMP biosynthesis</keyword>
<keyword id="KW-0436">Ligase</keyword>
<keyword id="KW-0547">Nucleotide-binding</keyword>
<keyword id="KW-0658">Purine biosynthesis</keyword>
<keyword id="KW-1185">Reference proteome</keyword>
<accession>Q6LYU3</accession>
<dbReference type="EC" id="6.3.5.2" evidence="1"/>
<dbReference type="EMBL" id="BX950229">
    <property type="protein sequence ID" value="CAF30450.1"/>
    <property type="molecule type" value="Genomic_DNA"/>
</dbReference>
<dbReference type="RefSeq" id="WP_011170838.1">
    <property type="nucleotide sequence ID" value="NC_005791.1"/>
</dbReference>
<dbReference type="SMR" id="Q6LYU3"/>
<dbReference type="STRING" id="267377.MMP0894"/>
<dbReference type="EnsemblBacteria" id="CAF30450">
    <property type="protein sequence ID" value="CAF30450"/>
    <property type="gene ID" value="MMP0894"/>
</dbReference>
<dbReference type="GeneID" id="2761428"/>
<dbReference type="KEGG" id="mmp:MMP0894"/>
<dbReference type="PATRIC" id="fig|267377.15.peg.920"/>
<dbReference type="eggNOG" id="arCOG00085">
    <property type="taxonomic scope" value="Archaea"/>
</dbReference>
<dbReference type="HOGENOM" id="CLU_014340_0_0_2"/>
<dbReference type="OrthoDB" id="33844at2157"/>
<dbReference type="UniPathway" id="UPA00189">
    <property type="reaction ID" value="UER00296"/>
</dbReference>
<dbReference type="Proteomes" id="UP000000590">
    <property type="component" value="Chromosome"/>
</dbReference>
<dbReference type="GO" id="GO:0005829">
    <property type="term" value="C:cytosol"/>
    <property type="evidence" value="ECO:0007669"/>
    <property type="project" value="TreeGrafter"/>
</dbReference>
<dbReference type="GO" id="GO:0005524">
    <property type="term" value="F:ATP binding"/>
    <property type="evidence" value="ECO:0007669"/>
    <property type="project" value="UniProtKB-UniRule"/>
</dbReference>
<dbReference type="GO" id="GO:0003921">
    <property type="term" value="F:GMP synthase activity"/>
    <property type="evidence" value="ECO:0007669"/>
    <property type="project" value="InterPro"/>
</dbReference>
<dbReference type="CDD" id="cd01997">
    <property type="entry name" value="GMP_synthase_C"/>
    <property type="match status" value="1"/>
</dbReference>
<dbReference type="FunFam" id="3.30.300.10:FF:000002">
    <property type="entry name" value="GMP synthase [glutamine-hydrolyzing]"/>
    <property type="match status" value="1"/>
</dbReference>
<dbReference type="Gene3D" id="3.30.300.10">
    <property type="match status" value="1"/>
</dbReference>
<dbReference type="Gene3D" id="3.40.50.620">
    <property type="entry name" value="HUPs"/>
    <property type="match status" value="1"/>
</dbReference>
<dbReference type="HAMAP" id="MF_00345">
    <property type="entry name" value="GMP_synthase_B"/>
    <property type="match status" value="1"/>
</dbReference>
<dbReference type="InterPro" id="IPR001674">
    <property type="entry name" value="GMP_synth_C"/>
</dbReference>
<dbReference type="InterPro" id="IPR026598">
    <property type="entry name" value="GMP_synthase_B"/>
</dbReference>
<dbReference type="InterPro" id="IPR025777">
    <property type="entry name" value="GMPS_ATP_PPase_dom"/>
</dbReference>
<dbReference type="InterPro" id="IPR022310">
    <property type="entry name" value="NAD/GMP_synthase"/>
</dbReference>
<dbReference type="InterPro" id="IPR014729">
    <property type="entry name" value="Rossmann-like_a/b/a_fold"/>
</dbReference>
<dbReference type="NCBIfam" id="TIGR00884">
    <property type="entry name" value="guaA_Cterm"/>
    <property type="match status" value="1"/>
</dbReference>
<dbReference type="PANTHER" id="PTHR11922:SF2">
    <property type="entry name" value="GMP SYNTHASE [GLUTAMINE-HYDROLYZING]"/>
    <property type="match status" value="1"/>
</dbReference>
<dbReference type="PANTHER" id="PTHR11922">
    <property type="entry name" value="GMP SYNTHASE-RELATED"/>
    <property type="match status" value="1"/>
</dbReference>
<dbReference type="Pfam" id="PF00958">
    <property type="entry name" value="GMP_synt_C"/>
    <property type="match status" value="1"/>
</dbReference>
<dbReference type="Pfam" id="PF02540">
    <property type="entry name" value="NAD_synthase"/>
    <property type="match status" value="1"/>
</dbReference>
<dbReference type="SUPFAM" id="SSF52402">
    <property type="entry name" value="Adenine nucleotide alpha hydrolases-like"/>
    <property type="match status" value="1"/>
</dbReference>
<dbReference type="PROSITE" id="PS51553">
    <property type="entry name" value="GMPS_ATP_PPASE"/>
    <property type="match status" value="1"/>
</dbReference>